<keyword id="KW-0426">Late protein</keyword>
<keyword id="KW-0472">Membrane</keyword>
<keyword id="KW-1185">Reference proteome</keyword>
<keyword id="KW-0812">Transmembrane</keyword>
<keyword id="KW-1133">Transmembrane helix</keyword>
<keyword id="KW-0946">Virion</keyword>
<accession>P0DSW1</accession>
<accession>P33838</accession>
<sequence length="68" mass="7541">MIGILLLIGICVAVTVAILYAMYNKIKNSQNPSPNVNLPPPETRNTRFVNNLEKDHISSLYNLVKSSV</sequence>
<organismHost>
    <name type="scientific">Homo sapiens</name>
    <name type="common">Human</name>
    <dbReference type="NCBI Taxonomy" id="9606"/>
</organismHost>
<organism>
    <name type="scientific">Variola virus (isolate Human/India/Ind3/1967)</name>
    <name type="common">VARV</name>
    <name type="synonym">Smallpox virus</name>
    <dbReference type="NCBI Taxonomy" id="587200"/>
    <lineage>
        <taxon>Viruses</taxon>
        <taxon>Varidnaviria</taxon>
        <taxon>Bamfordvirae</taxon>
        <taxon>Nucleocytoviricota</taxon>
        <taxon>Pokkesviricetes</taxon>
        <taxon>Chitovirales</taxon>
        <taxon>Poxviridae</taxon>
        <taxon>Chordopoxvirinae</taxon>
        <taxon>Orthopoxvirus</taxon>
        <taxon>Variola virus</taxon>
    </lineage>
</organism>
<feature type="chain" id="PRO_0000099240" description="Virion membrane protein OPG139">
    <location>
        <begin position="1"/>
        <end position="68"/>
    </location>
</feature>
<feature type="transmembrane region" description="Helical" evidence="2">
    <location>
        <begin position="1"/>
        <end position="21"/>
    </location>
</feature>
<feature type="topological domain" description="Virion surface" evidence="2">
    <location>
        <begin position="22"/>
        <end position="68"/>
    </location>
</feature>
<dbReference type="EMBL" id="X69198">
    <property type="protein sequence ID" value="CAA49058.1"/>
    <property type="molecule type" value="Genomic_DNA"/>
</dbReference>
<dbReference type="PIR" id="E36849">
    <property type="entry name" value="E36849"/>
</dbReference>
<dbReference type="RefSeq" id="NP_042161.1">
    <property type="nucleotide sequence ID" value="NC_001611.1"/>
</dbReference>
<dbReference type="SMR" id="P0DSW1"/>
<dbReference type="GeneID" id="1486488"/>
<dbReference type="KEGG" id="vg:1486488"/>
<dbReference type="Proteomes" id="UP000002060">
    <property type="component" value="Segment"/>
</dbReference>
<dbReference type="GO" id="GO:0016020">
    <property type="term" value="C:membrane"/>
    <property type="evidence" value="ECO:0007669"/>
    <property type="project" value="UniProtKB-KW"/>
</dbReference>
<dbReference type="GO" id="GO:0055036">
    <property type="term" value="C:virion membrane"/>
    <property type="evidence" value="ECO:0007669"/>
    <property type="project" value="UniProtKB-SubCell"/>
</dbReference>
<dbReference type="InterPro" id="IPR009236">
    <property type="entry name" value="Chordopox_A13L"/>
</dbReference>
<dbReference type="Pfam" id="PF05961">
    <property type="entry name" value="Chordopox_A13L"/>
    <property type="match status" value="1"/>
</dbReference>
<name>PG139_VAR67</name>
<reference key="1">
    <citation type="journal article" date="1993" name="FEBS Lett.">
        <title>Genes of variola and vaccinia viruses necessary to overcome the host protective mechanisms.</title>
        <authorList>
            <person name="Shchelkunov S.N."/>
            <person name="Blinov V.M."/>
            <person name="Sandakhchiev L.S."/>
        </authorList>
    </citation>
    <scope>NUCLEOTIDE SEQUENCE [LARGE SCALE GENOMIC DNA]</scope>
</reference>
<gene>
    <name type="primary">OPG139</name>
    <name type="ORF">A13L</name>
</gene>
<evidence type="ECO:0000250" key="1">
    <source>
        <dbReference type="UniProtKB" id="Q76ZQ4"/>
    </source>
</evidence>
<evidence type="ECO:0000255" key="2"/>
<evidence type="ECO:0000305" key="3"/>
<protein>
    <recommendedName>
        <fullName>Virion membrane protein OPG139</fullName>
    </recommendedName>
</protein>
<proteinExistence type="evidence at transcript level"/>
<comment type="function">
    <text evidence="1">Essential for the encapsidation of DNA into immature virions (IV) and the subsequent maturation of IV into mature virions (MV).</text>
</comment>
<comment type="subcellular location">
    <subcellularLocation>
        <location evidence="1">Virion membrane</location>
        <topology evidence="1">Single-pass membrane protein</topology>
    </subcellularLocation>
    <text evidence="1">Component of the mature virion (MV) membrane. The mature virion is located in the cytoplasm of infected cells and is probably released by cell lysis.</text>
</comment>
<comment type="induction">
    <text>Expressed in the late phase of the viral replicative cycle.</text>
</comment>
<comment type="PTM">
    <text evidence="1">Phosphorylated by a OPG054-independent mechanism.</text>
</comment>
<comment type="similarity">
    <text evidence="3">Belongs to the orthopoxvirus OPG139 family.</text>
</comment>